<dbReference type="EMBL" id="EQ966370">
    <property type="protein sequence ID" value="EED79701.1"/>
    <property type="molecule type" value="Genomic_DNA"/>
</dbReference>
<dbReference type="RefSeq" id="XP_002475109.1">
    <property type="nucleotide sequence ID" value="XM_002475064.1"/>
</dbReference>
<dbReference type="SMR" id="B8PHE1"/>
<dbReference type="FunCoup" id="B8PHE1">
    <property type="interactions" value="86"/>
</dbReference>
<dbReference type="STRING" id="561896.B8PHE1"/>
<dbReference type="KEGG" id="ppl:POSPLDRAFT_90662"/>
<dbReference type="HOGENOM" id="CLU_047155_4_1_1"/>
<dbReference type="InParanoid" id="B8PHE1"/>
<dbReference type="OMA" id="FAKWTVG"/>
<dbReference type="OrthoDB" id="277235at2759"/>
<dbReference type="GO" id="GO:0005739">
    <property type="term" value="C:mitochondrion"/>
    <property type="evidence" value="ECO:0007669"/>
    <property type="project" value="UniProtKB-SubCell"/>
</dbReference>
<dbReference type="GO" id="GO:0003746">
    <property type="term" value="F:translation elongation factor activity"/>
    <property type="evidence" value="ECO:0007669"/>
    <property type="project" value="UniProtKB-UniRule"/>
</dbReference>
<dbReference type="GO" id="GO:0070125">
    <property type="term" value="P:mitochondrial translational elongation"/>
    <property type="evidence" value="ECO:0007669"/>
    <property type="project" value="TreeGrafter"/>
</dbReference>
<dbReference type="Gene3D" id="1.10.8.10">
    <property type="entry name" value="DNA helicase RuvA subunit, C-terminal domain"/>
    <property type="match status" value="1"/>
</dbReference>
<dbReference type="Gene3D" id="3.30.479.20">
    <property type="entry name" value="Elongation factor Ts, dimerisation domain"/>
    <property type="match status" value="2"/>
</dbReference>
<dbReference type="HAMAP" id="MF_00050">
    <property type="entry name" value="EF_Ts"/>
    <property type="match status" value="1"/>
</dbReference>
<dbReference type="InterPro" id="IPR036402">
    <property type="entry name" value="EF-Ts_dimer_sf"/>
</dbReference>
<dbReference type="InterPro" id="IPR001816">
    <property type="entry name" value="Transl_elong_EFTs/EF1B"/>
</dbReference>
<dbReference type="InterPro" id="IPR014039">
    <property type="entry name" value="Transl_elong_EFTs/EF1B_dimer"/>
</dbReference>
<dbReference type="InterPro" id="IPR018101">
    <property type="entry name" value="Transl_elong_Ts_CS"/>
</dbReference>
<dbReference type="InterPro" id="IPR009060">
    <property type="entry name" value="UBA-like_sf"/>
</dbReference>
<dbReference type="PANTHER" id="PTHR11741">
    <property type="entry name" value="ELONGATION FACTOR TS"/>
    <property type="match status" value="1"/>
</dbReference>
<dbReference type="PANTHER" id="PTHR11741:SF0">
    <property type="entry name" value="ELONGATION FACTOR TS, MITOCHONDRIAL"/>
    <property type="match status" value="1"/>
</dbReference>
<dbReference type="Pfam" id="PF00889">
    <property type="entry name" value="EF_TS"/>
    <property type="match status" value="1"/>
</dbReference>
<dbReference type="SUPFAM" id="SSF54713">
    <property type="entry name" value="Elongation factor Ts (EF-Ts), dimerisation domain"/>
    <property type="match status" value="1"/>
</dbReference>
<dbReference type="SUPFAM" id="SSF46934">
    <property type="entry name" value="UBA-like"/>
    <property type="match status" value="1"/>
</dbReference>
<dbReference type="PROSITE" id="PS01127">
    <property type="entry name" value="EF_TS_2"/>
    <property type="match status" value="1"/>
</dbReference>
<feature type="transit peptide" description="Mitochondrion" evidence="1">
    <location>
        <begin position="1"/>
        <end position="17"/>
    </location>
</feature>
<feature type="chain" id="PRO_0000402348" description="Elongation factor Ts, mitochondrial 2">
    <location>
        <begin position="18"/>
        <end position="341"/>
    </location>
</feature>
<evidence type="ECO:0000255" key="1">
    <source>
        <dbReference type="HAMAP-Rule" id="MF_03135"/>
    </source>
</evidence>
<organism>
    <name type="scientific">Postia placenta (strain ATCC 44394 / Madison 698-R)</name>
    <name type="common">Brown rot fungus</name>
    <name type="synonym">Poria monticola</name>
    <dbReference type="NCBI Taxonomy" id="561896"/>
    <lineage>
        <taxon>Eukaryota</taxon>
        <taxon>Fungi</taxon>
        <taxon>Dikarya</taxon>
        <taxon>Basidiomycota</taxon>
        <taxon>Agaricomycotina</taxon>
        <taxon>Agaricomycetes</taxon>
        <taxon>Polyporales</taxon>
        <taxon>Adustoporiaceae</taxon>
        <taxon>Rhodonia</taxon>
    </lineage>
</organism>
<comment type="function">
    <text evidence="1">Associates with the EF-Tu.GDP complex and induces the exchange of GDP to GTP. It remains bound to the aminoacyl-tRNA.EF-Tu.GTP complex up to the GTP hydrolysis stage on the ribosome.</text>
</comment>
<comment type="subcellular location">
    <subcellularLocation>
        <location evidence="1">Mitochondrion</location>
    </subcellularLocation>
</comment>
<comment type="similarity">
    <text evidence="1">Belongs to the EF-Ts family.</text>
</comment>
<name>EFTS2_POSPM</name>
<proteinExistence type="inferred from homology"/>
<reference key="1">
    <citation type="journal article" date="2009" name="Proc. Natl. Acad. Sci. U.S.A.">
        <title>Genome, transcriptome, and secretome analysis of wood decay fungus Postia placenta supports unique mechanisms of lignocellulose conversion.</title>
        <authorList>
            <person name="Martinez D."/>
            <person name="Challacombe J."/>
            <person name="Morgenstern I."/>
            <person name="Hibbett D."/>
            <person name="Schmoll M."/>
            <person name="Kubicek C.P."/>
            <person name="Ferreira P."/>
            <person name="Ruiz-Duenas F.J."/>
            <person name="Martinez A.T."/>
            <person name="Kersten P."/>
            <person name="Hammel K.E."/>
            <person name="Vanden Wymelenberg A."/>
            <person name="Gaskell J."/>
            <person name="Lindquist E."/>
            <person name="Sabat G."/>
            <person name="Splinter BonDurant S."/>
            <person name="Larrondo L.F."/>
            <person name="Canessa P."/>
            <person name="Vicuna R."/>
            <person name="Yadav J."/>
            <person name="Doddapaneni H."/>
            <person name="Subramanian V."/>
            <person name="Pisabarro A.G."/>
            <person name="Lavin J.L."/>
            <person name="Oguiza J.A."/>
            <person name="Master E."/>
            <person name="Henrissat B."/>
            <person name="Coutinho P.M."/>
            <person name="Harris P."/>
            <person name="Magnuson J.K."/>
            <person name="Baker S.E."/>
            <person name="Bruno K."/>
            <person name="Kenealy W."/>
            <person name="Hoegger P.J."/>
            <person name="Kuees U."/>
            <person name="Ramaiya P."/>
            <person name="Lucas S."/>
            <person name="Salamov A."/>
            <person name="Shapiro H."/>
            <person name="Tu H."/>
            <person name="Chee C.L."/>
            <person name="Misra M."/>
            <person name="Xie G."/>
            <person name="Teter S."/>
            <person name="Yaver D."/>
            <person name="James T."/>
            <person name="Mokrejs M."/>
            <person name="Pospisek M."/>
            <person name="Grigoriev I.V."/>
            <person name="Brettin T."/>
            <person name="Rokhsar D."/>
            <person name="Berka R."/>
            <person name="Cullen D."/>
        </authorList>
    </citation>
    <scope>NUCLEOTIDE SEQUENCE [LARGE SCALE GENOMIC DNA]</scope>
    <source>
        <strain>ATCC 44394 / Madison 698-R</strain>
    </source>
</reference>
<sequence>MLAARFASRAFPRTRLYSTAPKRSLKELVTELRSQADVSPIQAGQALKASDMDVSKALLWLEKQRTQSAVKKAAKVADRTANEGLIGTTVLSSGVANGRRVGVRAAMVELNCETDFVARNELFANLLEDITHTAAFISEPANAETFMQPFSMETLQNAPLLSQTKPSQNGKATVSEAMRDLTGRVGEKISLRRALTVVRDPFTSSQPDLALRVAARVHQSVFNPTQGRIGSLALLALKSKRLSEAIASQTFQDDLDKLCQALGRQVIGFPTTCIRSPPGTTDEGALYDQPFSMFIGPGNDQSVGAFLQSWAQERSLVNKDEEQSAGVEVLEFAKWTVGDVV</sequence>
<accession>B8PHE1</accession>
<gene>
    <name evidence="1" type="primary">TSF1-2</name>
    <name type="ORF">POSPLDRAFT_90662</name>
</gene>
<keyword id="KW-0251">Elongation factor</keyword>
<keyword id="KW-0496">Mitochondrion</keyword>
<keyword id="KW-0648">Protein biosynthesis</keyword>
<keyword id="KW-0809">Transit peptide</keyword>
<protein>
    <recommendedName>
        <fullName evidence="1">Elongation factor Ts, mitochondrial 2</fullName>
        <shortName evidence="1">EF-Ts 2</shortName>
        <shortName evidence="1">EF-TsMt 2</shortName>
    </recommendedName>
</protein>